<comment type="interaction">
    <interactant intactId="EBI-744719">
        <id>Q9BWG4</id>
    </interactant>
    <interactant intactId="EBI-465156">
        <id>Q9UBH0</id>
        <label>IL36RN</label>
    </interactant>
    <organismsDiffer>false</organismsDiffer>
    <experiments>4</experiments>
</comment>
<comment type="interaction">
    <interactant intactId="EBI-744719">
        <id>Q9BWG4</id>
    </interactant>
    <interactant intactId="EBI-3906896">
        <id>P61371</id>
        <label>ISL1</label>
    </interactant>
    <organismsDiffer>false</organismsDiffer>
    <experiments>4</experiments>
</comment>
<comment type="interaction">
    <interactant intactId="EBI-744719">
        <id>Q9BWG4</id>
    </interactant>
    <interactant intactId="EBI-677177">
        <id>Q86U70</id>
        <label>LDB1</label>
    </interactant>
    <organismsDiffer>false</organismsDiffer>
    <experiments>3</experiments>
</comment>
<comment type="interaction">
    <interactant intactId="EBI-744719">
        <id>Q9BWG4</id>
    </interactant>
    <interactant intactId="EBI-11979761">
        <id>Q86U70-2</id>
        <label>LDB1</label>
    </interactant>
    <organismsDiffer>false</organismsDiffer>
    <experiments>4</experiments>
</comment>
<comment type="interaction">
    <interactant intactId="EBI-744719">
        <id>Q9BWG4</id>
    </interactant>
    <interactant intactId="EBI-7950783">
        <id>Q96JP2</id>
        <label>MYO15B</label>
    </interactant>
    <organismsDiffer>false</organismsDiffer>
    <experiments>3</experiments>
</comment>
<comment type="interaction">
    <interactant intactId="EBI-744719">
        <id>Q9BWG4</id>
    </interactant>
    <interactant intactId="EBI-79893">
        <id>Q92569</id>
        <label>PIK3R3</label>
    </interactant>
    <organismsDiffer>false</organismsDiffer>
    <experiments>3</experiments>
</comment>
<comment type="interaction">
    <interactant intactId="EBI-744719">
        <id>Q9BWG4</id>
    </interactant>
    <interactant intactId="EBI-714158">
        <id>Q13526</id>
        <label>PIN1</label>
    </interactant>
    <organismsDiffer>false</organismsDiffer>
    <experiments>4</experiments>
</comment>
<comment type="interaction">
    <interactant intactId="EBI-744719">
        <id>Q9BWG4</id>
    </interactant>
    <interactant intactId="EBI-742688">
        <id>Q9NZD8</id>
        <label>SPG21</label>
    </interactant>
    <organismsDiffer>false</organismsDiffer>
    <experiments>3</experiments>
</comment>
<comment type="subcellular location">
    <subcellularLocation>
        <location evidence="1">Nucleus</location>
    </subcellularLocation>
</comment>
<comment type="alternative products">
    <event type="alternative splicing"/>
    <isoform>
        <id>Q9BWG4-1</id>
        <name>1</name>
        <sequence type="displayed"/>
    </isoform>
    <isoform>
        <id>Q9BWG4-2</id>
        <name>2</name>
        <sequence type="described" ref="VSP_054113"/>
    </isoform>
</comment>
<sequence length="385" mass="39388">MYAKGGKGSAVPSDSQAREKLALYVYEYLLHIGAQKSAQTFLSEIRWEKNITLGEPPGFLHSWWCVFWDLYCAAPDRREACEHSGEAKAFQDYSAAAAPSPVMGSMAPGDTMAAGSMAAGFFQGPPGSQPSPHNPNAPMMGPHGQPFMSPRFPGGPRPTLRMPSQPPAGLPGSQPLLPGAMEPSPRAQGHPSMGGPMQRVTPPRGMASVGPQSYGGGMRPPPNSLAGPGLPAMNMGPGVRGPWASPSGNSIPYSSSSPGSYTGPPGGGGPPGTPIMPSPGDSTNSSENMYTIMNPIGQGAGRANFPLGPGPEGPMAAMSAMEPHHVNGSLGSGDMDGLPKSSPGAVAGLSNAPGTPRDDGEMAAAGTFLHPFPSESYSPGMTMSV</sequence>
<dbReference type="EMBL" id="AY026292">
    <property type="protein sequence ID" value="AAK20020.1"/>
    <property type="molecule type" value="Genomic_DNA"/>
</dbReference>
<dbReference type="EMBL" id="AY026276">
    <property type="protein sequence ID" value="AAK20020.1"/>
    <property type="status" value="JOINED"/>
    <property type="molecule type" value="Genomic_DNA"/>
</dbReference>
<dbReference type="EMBL" id="AY026277">
    <property type="protein sequence ID" value="AAK20020.1"/>
    <property type="status" value="JOINED"/>
    <property type="molecule type" value="Genomic_DNA"/>
</dbReference>
<dbReference type="EMBL" id="AY026278">
    <property type="protein sequence ID" value="AAK20020.1"/>
    <property type="status" value="JOINED"/>
    <property type="molecule type" value="Genomic_DNA"/>
</dbReference>
<dbReference type="EMBL" id="AY026279">
    <property type="protein sequence ID" value="AAK20020.1"/>
    <property type="status" value="JOINED"/>
    <property type="molecule type" value="Genomic_DNA"/>
</dbReference>
<dbReference type="EMBL" id="AY026280">
    <property type="protein sequence ID" value="AAK20020.1"/>
    <property type="status" value="JOINED"/>
    <property type="molecule type" value="Genomic_DNA"/>
</dbReference>
<dbReference type="EMBL" id="AY026281">
    <property type="protein sequence ID" value="AAK20020.1"/>
    <property type="status" value="JOINED"/>
    <property type="molecule type" value="Genomic_DNA"/>
</dbReference>
<dbReference type="EMBL" id="AY026282">
    <property type="protein sequence ID" value="AAK20020.1"/>
    <property type="status" value="JOINED"/>
    <property type="molecule type" value="Genomic_DNA"/>
</dbReference>
<dbReference type="EMBL" id="AY026283">
    <property type="protein sequence ID" value="AAK20020.1"/>
    <property type="status" value="JOINED"/>
    <property type="molecule type" value="Genomic_DNA"/>
</dbReference>
<dbReference type="EMBL" id="AY026284">
    <property type="protein sequence ID" value="AAK20020.1"/>
    <property type="status" value="JOINED"/>
    <property type="molecule type" value="Genomic_DNA"/>
</dbReference>
<dbReference type="EMBL" id="AY026285">
    <property type="protein sequence ID" value="AAK20020.1"/>
    <property type="status" value="JOINED"/>
    <property type="molecule type" value="Genomic_DNA"/>
</dbReference>
<dbReference type="EMBL" id="AY026286">
    <property type="protein sequence ID" value="AAK20020.1"/>
    <property type="status" value="JOINED"/>
    <property type="molecule type" value="Genomic_DNA"/>
</dbReference>
<dbReference type="EMBL" id="AY026287">
    <property type="protein sequence ID" value="AAK20020.1"/>
    <property type="status" value="JOINED"/>
    <property type="molecule type" value="Genomic_DNA"/>
</dbReference>
<dbReference type="EMBL" id="AY026288">
    <property type="protein sequence ID" value="AAK20020.1"/>
    <property type="status" value="JOINED"/>
    <property type="molecule type" value="Genomic_DNA"/>
</dbReference>
<dbReference type="EMBL" id="AY026289">
    <property type="protein sequence ID" value="AAK20020.1"/>
    <property type="status" value="JOINED"/>
    <property type="molecule type" value="Genomic_DNA"/>
</dbReference>
<dbReference type="EMBL" id="AY026290">
    <property type="protein sequence ID" value="AAK20020.1"/>
    <property type="status" value="JOINED"/>
    <property type="molecule type" value="Genomic_DNA"/>
</dbReference>
<dbReference type="EMBL" id="AY026291">
    <property type="protein sequence ID" value="AAK20020.1"/>
    <property type="status" value="JOINED"/>
    <property type="molecule type" value="Genomic_DNA"/>
</dbReference>
<dbReference type="EMBL" id="AC008397">
    <property type="status" value="NOT_ANNOTATED_CDS"/>
    <property type="molecule type" value="Genomic_DNA"/>
</dbReference>
<dbReference type="EMBL" id="BC000274">
    <property type="protein sequence ID" value="AAH00274.1"/>
    <property type="molecule type" value="mRNA"/>
</dbReference>
<dbReference type="CCDS" id="CCDS12378.1">
    <molecule id="Q9BWG4-1"/>
</dbReference>
<dbReference type="CCDS" id="CCDS32960.1">
    <molecule id="Q9BWG4-2"/>
</dbReference>
<dbReference type="RefSeq" id="NP_001009998.1">
    <molecule id="Q9BWG4-2"/>
    <property type="nucleotide sequence ID" value="NM_001009998.4"/>
</dbReference>
<dbReference type="RefSeq" id="NP_116016.1">
    <molecule id="Q9BWG4-1"/>
    <property type="nucleotide sequence ID" value="NM_032627.5"/>
</dbReference>
<dbReference type="PDB" id="7OBX">
    <property type="method" value="X-ray"/>
    <property type="resolution" value="1.80 A"/>
    <property type="chains" value="B=375-385"/>
</dbReference>
<dbReference type="PDB" id="7OBY">
    <property type="method" value="X-ray"/>
    <property type="resolution" value="2.10 A"/>
    <property type="chains" value="B=375-385"/>
</dbReference>
<dbReference type="PDBsum" id="7OBX"/>
<dbReference type="PDBsum" id="7OBY"/>
<dbReference type="SMR" id="Q9BWG4"/>
<dbReference type="BioGRID" id="128006">
    <property type="interactions" value="46"/>
</dbReference>
<dbReference type="FunCoup" id="Q9BWG4">
    <property type="interactions" value="1045"/>
</dbReference>
<dbReference type="IntAct" id="Q9BWG4">
    <property type="interactions" value="38"/>
</dbReference>
<dbReference type="MINT" id="Q9BWG4"/>
<dbReference type="STRING" id="9606.ENSP00000270061"/>
<dbReference type="GlyConnect" id="2076">
    <property type="glycosylation" value="1 N-Linked glycan (1 site)"/>
</dbReference>
<dbReference type="GlyCosmos" id="Q9BWG4">
    <property type="glycosylation" value="1 site, 2 glycans"/>
</dbReference>
<dbReference type="GlyGen" id="Q9BWG4">
    <property type="glycosylation" value="3 sites, 2 N-linked glycans (1 site), 1 O-linked glycan (1 site)"/>
</dbReference>
<dbReference type="iPTMnet" id="Q9BWG4"/>
<dbReference type="PhosphoSitePlus" id="Q9BWG4"/>
<dbReference type="BioMuta" id="SSBP4"/>
<dbReference type="DMDM" id="27734580"/>
<dbReference type="jPOST" id="Q9BWG4"/>
<dbReference type="MassIVE" id="Q9BWG4"/>
<dbReference type="PaxDb" id="9606-ENSP00000270061"/>
<dbReference type="PeptideAtlas" id="Q9BWG4"/>
<dbReference type="ProteomicsDB" id="79275">
    <molecule id="Q9BWG4-1"/>
</dbReference>
<dbReference type="ProteomicsDB" id="79333"/>
<dbReference type="Pumba" id="Q9BWG4"/>
<dbReference type="Antibodypedia" id="28035">
    <property type="antibodies" value="77 antibodies from 17 providers"/>
</dbReference>
<dbReference type="DNASU" id="170463"/>
<dbReference type="Ensembl" id="ENST00000270061.12">
    <molecule id="Q9BWG4-1"/>
    <property type="protein sequence ID" value="ENSP00000270061.5"/>
    <property type="gene ID" value="ENSG00000130511.16"/>
</dbReference>
<dbReference type="Ensembl" id="ENST00000348495.10">
    <molecule id="Q9BWG4-2"/>
    <property type="protein sequence ID" value="ENSP00000252807.7"/>
    <property type="gene ID" value="ENSG00000130511.16"/>
</dbReference>
<dbReference type="GeneID" id="170463"/>
<dbReference type="KEGG" id="hsa:170463"/>
<dbReference type="MANE-Select" id="ENST00000270061.12">
    <property type="protein sequence ID" value="ENSP00000270061.5"/>
    <property type="RefSeq nucleotide sequence ID" value="NM_032627.5"/>
    <property type="RefSeq protein sequence ID" value="NP_116016.1"/>
</dbReference>
<dbReference type="UCSC" id="uc002niy.4">
    <molecule id="Q9BWG4-1"/>
    <property type="organism name" value="human"/>
</dbReference>
<dbReference type="AGR" id="HGNC:15676"/>
<dbReference type="CTD" id="170463"/>
<dbReference type="DisGeNET" id="170463"/>
<dbReference type="GeneCards" id="SSBP4"/>
<dbReference type="HGNC" id="HGNC:15676">
    <property type="gene designation" value="SSBP4"/>
</dbReference>
<dbReference type="HPA" id="ENSG00000130511">
    <property type="expression patterns" value="Low tissue specificity"/>
</dbReference>
<dbReference type="MIM" id="607391">
    <property type="type" value="gene"/>
</dbReference>
<dbReference type="neXtProt" id="NX_Q9BWG4"/>
<dbReference type="OpenTargets" id="ENSG00000130511"/>
<dbReference type="PharmGKB" id="PA38018"/>
<dbReference type="VEuPathDB" id="HostDB:ENSG00000130511"/>
<dbReference type="eggNOG" id="KOG4594">
    <property type="taxonomic scope" value="Eukaryota"/>
</dbReference>
<dbReference type="GeneTree" id="ENSGT00950000183049"/>
<dbReference type="HOGENOM" id="CLU_053914_1_0_1"/>
<dbReference type="InParanoid" id="Q9BWG4"/>
<dbReference type="OMA" id="MIGMPPG"/>
<dbReference type="OrthoDB" id="5600002at2759"/>
<dbReference type="PAN-GO" id="Q9BWG4">
    <property type="GO annotations" value="2 GO annotations based on evolutionary models"/>
</dbReference>
<dbReference type="PhylomeDB" id="Q9BWG4"/>
<dbReference type="TreeFam" id="TF318961"/>
<dbReference type="PathwayCommons" id="Q9BWG4"/>
<dbReference type="SignaLink" id="Q9BWG4"/>
<dbReference type="BioGRID-ORCS" id="170463">
    <property type="hits" value="46 hits in 1156 CRISPR screens"/>
</dbReference>
<dbReference type="ChiTaRS" id="SSBP4">
    <property type="organism name" value="human"/>
</dbReference>
<dbReference type="GenomeRNAi" id="170463"/>
<dbReference type="Pharos" id="Q9BWG4">
    <property type="development level" value="Tdark"/>
</dbReference>
<dbReference type="PRO" id="PR:Q9BWG4"/>
<dbReference type="Proteomes" id="UP000005640">
    <property type="component" value="Chromosome 19"/>
</dbReference>
<dbReference type="RNAct" id="Q9BWG4">
    <property type="molecule type" value="protein"/>
</dbReference>
<dbReference type="Bgee" id="ENSG00000130511">
    <property type="expression patterns" value="Expressed in right uterine tube and 165 other cell types or tissues"/>
</dbReference>
<dbReference type="ExpressionAtlas" id="Q9BWG4">
    <property type="expression patterns" value="baseline and differential"/>
</dbReference>
<dbReference type="GO" id="GO:0005634">
    <property type="term" value="C:nucleus"/>
    <property type="evidence" value="ECO:0000318"/>
    <property type="project" value="GO_Central"/>
</dbReference>
<dbReference type="GO" id="GO:0003697">
    <property type="term" value="F:single-stranded DNA binding"/>
    <property type="evidence" value="ECO:0007669"/>
    <property type="project" value="InterPro"/>
</dbReference>
<dbReference type="GO" id="GO:0045944">
    <property type="term" value="P:positive regulation of transcription by RNA polymerase II"/>
    <property type="evidence" value="ECO:0000318"/>
    <property type="project" value="GO_Central"/>
</dbReference>
<dbReference type="InterPro" id="IPR006594">
    <property type="entry name" value="LisH"/>
</dbReference>
<dbReference type="InterPro" id="IPR008116">
    <property type="entry name" value="SSDP_DNA-bd"/>
</dbReference>
<dbReference type="PANTHER" id="PTHR12610">
    <property type="entry name" value="SINGLE STRANDED DNA BINDING PROTEIN"/>
    <property type="match status" value="1"/>
</dbReference>
<dbReference type="PANTHER" id="PTHR12610:SF30">
    <property type="entry name" value="SINGLE-STRANDED DNA-BINDING PROTEIN 4"/>
    <property type="match status" value="1"/>
</dbReference>
<dbReference type="Pfam" id="PF04503">
    <property type="entry name" value="SSDP"/>
    <property type="match status" value="1"/>
</dbReference>
<dbReference type="PRINTS" id="PR01743">
    <property type="entry name" value="SSDNABINDING"/>
</dbReference>
<dbReference type="SMART" id="SM00667">
    <property type="entry name" value="LisH"/>
    <property type="match status" value="1"/>
</dbReference>
<dbReference type="PROSITE" id="PS50896">
    <property type="entry name" value="LISH"/>
    <property type="match status" value="1"/>
</dbReference>
<reference key="1">
    <citation type="journal article" date="2002" name="Genomics">
        <title>A novel, evolutionarily conserved gene family with putative sequence-specific single-stranded DNA-binding activity.</title>
        <authorList>
            <person name="Castro P.D."/>
            <person name="Liang H."/>
            <person name="Liang J.C."/>
            <person name="Nagarajan L."/>
        </authorList>
    </citation>
    <scope>NUCLEOTIDE SEQUENCE [GENOMIC DNA]</scope>
    <scope>GENE STRUCTURE</scope>
    <scope>ALTERNATIVE SPLICING (ISOFORM 2)</scope>
</reference>
<reference key="2">
    <citation type="journal article" date="2004" name="Nature">
        <title>The DNA sequence and biology of human chromosome 19.</title>
        <authorList>
            <person name="Grimwood J."/>
            <person name="Gordon L.A."/>
            <person name="Olsen A.S."/>
            <person name="Terry A."/>
            <person name="Schmutz J."/>
            <person name="Lamerdin J.E."/>
            <person name="Hellsten U."/>
            <person name="Goodstein D."/>
            <person name="Couronne O."/>
            <person name="Tran-Gyamfi M."/>
            <person name="Aerts A."/>
            <person name="Altherr M."/>
            <person name="Ashworth L."/>
            <person name="Bajorek E."/>
            <person name="Black S."/>
            <person name="Branscomb E."/>
            <person name="Caenepeel S."/>
            <person name="Carrano A.V."/>
            <person name="Caoile C."/>
            <person name="Chan Y.M."/>
            <person name="Christensen M."/>
            <person name="Cleland C.A."/>
            <person name="Copeland A."/>
            <person name="Dalin E."/>
            <person name="Dehal P."/>
            <person name="Denys M."/>
            <person name="Detter J.C."/>
            <person name="Escobar J."/>
            <person name="Flowers D."/>
            <person name="Fotopulos D."/>
            <person name="Garcia C."/>
            <person name="Georgescu A.M."/>
            <person name="Glavina T."/>
            <person name="Gomez M."/>
            <person name="Gonzales E."/>
            <person name="Groza M."/>
            <person name="Hammon N."/>
            <person name="Hawkins T."/>
            <person name="Haydu L."/>
            <person name="Ho I."/>
            <person name="Huang W."/>
            <person name="Israni S."/>
            <person name="Jett J."/>
            <person name="Kadner K."/>
            <person name="Kimball H."/>
            <person name="Kobayashi A."/>
            <person name="Larionov V."/>
            <person name="Leem S.-H."/>
            <person name="Lopez F."/>
            <person name="Lou Y."/>
            <person name="Lowry S."/>
            <person name="Malfatti S."/>
            <person name="Martinez D."/>
            <person name="McCready P.M."/>
            <person name="Medina C."/>
            <person name="Morgan J."/>
            <person name="Nelson K."/>
            <person name="Nolan M."/>
            <person name="Ovcharenko I."/>
            <person name="Pitluck S."/>
            <person name="Pollard M."/>
            <person name="Popkie A.P."/>
            <person name="Predki P."/>
            <person name="Quan G."/>
            <person name="Ramirez L."/>
            <person name="Rash S."/>
            <person name="Retterer J."/>
            <person name="Rodriguez A."/>
            <person name="Rogers S."/>
            <person name="Salamov A."/>
            <person name="Salazar A."/>
            <person name="She X."/>
            <person name="Smith D."/>
            <person name="Slezak T."/>
            <person name="Solovyev V."/>
            <person name="Thayer N."/>
            <person name="Tice H."/>
            <person name="Tsai M."/>
            <person name="Ustaszewska A."/>
            <person name="Vo N."/>
            <person name="Wagner M."/>
            <person name="Wheeler J."/>
            <person name="Wu K."/>
            <person name="Xie G."/>
            <person name="Yang J."/>
            <person name="Dubchak I."/>
            <person name="Furey T.S."/>
            <person name="DeJong P."/>
            <person name="Dickson M."/>
            <person name="Gordon D."/>
            <person name="Eichler E.E."/>
            <person name="Pennacchio L.A."/>
            <person name="Richardson P."/>
            <person name="Stubbs L."/>
            <person name="Rokhsar D.S."/>
            <person name="Myers R.M."/>
            <person name="Rubin E.M."/>
            <person name="Lucas S.M."/>
        </authorList>
    </citation>
    <scope>NUCLEOTIDE SEQUENCE [LARGE SCALE GENOMIC DNA]</scope>
</reference>
<reference key="3">
    <citation type="journal article" date="2004" name="Genome Res.">
        <title>The status, quality, and expansion of the NIH full-length cDNA project: the Mammalian Gene Collection (MGC).</title>
        <authorList>
            <consortium name="The MGC Project Team"/>
        </authorList>
    </citation>
    <scope>NUCLEOTIDE SEQUENCE [LARGE SCALE MRNA] (ISOFORM 1)</scope>
    <source>
        <tissue>Eye</tissue>
    </source>
</reference>
<reference key="4">
    <citation type="journal article" date="2008" name="J. Proteome Res.">
        <title>Combining protein-based IMAC, peptide-based IMAC, and MudPIT for efficient phosphoproteomic analysis.</title>
        <authorList>
            <person name="Cantin G.T."/>
            <person name="Yi W."/>
            <person name="Lu B."/>
            <person name="Park S.K."/>
            <person name="Xu T."/>
            <person name="Lee J.-D."/>
            <person name="Yates J.R. III"/>
        </authorList>
    </citation>
    <scope>PHOSPHORYLATION [LARGE SCALE ANALYSIS] AT THR-355</scope>
    <scope>IDENTIFICATION BY MASS SPECTROMETRY [LARGE SCALE ANALYSIS]</scope>
    <source>
        <tissue>Cervix carcinoma</tissue>
    </source>
</reference>
<reference key="5">
    <citation type="journal article" date="2008" name="Proc. Natl. Acad. Sci. U.S.A.">
        <title>A quantitative atlas of mitotic phosphorylation.</title>
        <authorList>
            <person name="Dephoure N."/>
            <person name="Zhou C."/>
            <person name="Villen J."/>
            <person name="Beausoleil S.A."/>
            <person name="Bakalarski C.E."/>
            <person name="Elledge S.J."/>
            <person name="Gygi S.P."/>
        </authorList>
    </citation>
    <scope>IDENTIFICATION BY MASS SPECTROMETRY [LARGE SCALE ANALYSIS]</scope>
    <source>
        <tissue>Cervix carcinoma</tissue>
    </source>
</reference>
<reference key="6">
    <citation type="journal article" date="2009" name="Anal. Chem.">
        <title>Lys-N and trypsin cover complementary parts of the phosphoproteome in a refined SCX-based approach.</title>
        <authorList>
            <person name="Gauci S."/>
            <person name="Helbig A.O."/>
            <person name="Slijper M."/>
            <person name="Krijgsveld J."/>
            <person name="Heck A.J."/>
            <person name="Mohammed S."/>
        </authorList>
    </citation>
    <scope>IDENTIFICATION BY MASS SPECTROMETRY [LARGE SCALE ANALYSIS]</scope>
</reference>
<reference key="7">
    <citation type="journal article" date="2009" name="Sci. Signal.">
        <title>Quantitative phosphoproteomic analysis of T cell receptor signaling reveals system-wide modulation of protein-protein interactions.</title>
        <authorList>
            <person name="Mayya V."/>
            <person name="Lundgren D.H."/>
            <person name="Hwang S.-I."/>
            <person name="Rezaul K."/>
            <person name="Wu L."/>
            <person name="Eng J.K."/>
            <person name="Rodionov V."/>
            <person name="Han D.K."/>
        </authorList>
    </citation>
    <scope>PHOSPHORYLATION [LARGE SCALE ANALYSIS] AT THR-355</scope>
    <scope>IDENTIFICATION BY MASS SPECTROMETRY [LARGE SCALE ANALYSIS]</scope>
    <source>
        <tissue>Leukemic T-cell</tissue>
    </source>
</reference>
<reference key="8">
    <citation type="journal article" date="2010" name="Sci. Signal.">
        <title>Quantitative phosphoproteomics reveals widespread full phosphorylation site occupancy during mitosis.</title>
        <authorList>
            <person name="Olsen J.V."/>
            <person name="Vermeulen M."/>
            <person name="Santamaria A."/>
            <person name="Kumar C."/>
            <person name="Miller M.L."/>
            <person name="Jensen L.J."/>
            <person name="Gnad F."/>
            <person name="Cox J."/>
            <person name="Jensen T.S."/>
            <person name="Nigg E.A."/>
            <person name="Brunak S."/>
            <person name="Mann M."/>
        </authorList>
    </citation>
    <scope>PHOSPHORYLATION [LARGE SCALE ANALYSIS] AT THR-355</scope>
    <scope>IDENTIFICATION BY MASS SPECTROMETRY [LARGE SCALE ANALYSIS]</scope>
    <source>
        <tissue>Cervix carcinoma</tissue>
    </source>
</reference>
<reference key="9">
    <citation type="journal article" date="2012" name="Proc. Natl. Acad. Sci. U.S.A.">
        <title>N-terminal acetylome analyses and functional insights of the N-terminal acetyltransferase NatB.</title>
        <authorList>
            <person name="Van Damme P."/>
            <person name="Lasa M."/>
            <person name="Polevoda B."/>
            <person name="Gazquez C."/>
            <person name="Elosegui-Artola A."/>
            <person name="Kim D.S."/>
            <person name="De Juan-Pardo E."/>
            <person name="Demeyer K."/>
            <person name="Hole K."/>
            <person name="Larrea E."/>
            <person name="Timmerman E."/>
            <person name="Prieto J."/>
            <person name="Arnesen T."/>
            <person name="Sherman F."/>
            <person name="Gevaert K."/>
            <person name="Aldabe R."/>
        </authorList>
    </citation>
    <scope>ACETYLATION [LARGE SCALE ANALYSIS] AT MET-1</scope>
    <scope>IDENTIFICATION BY MASS SPECTROMETRY [LARGE SCALE ANALYSIS]</scope>
</reference>
<reference key="10">
    <citation type="journal article" date="2013" name="J. Proteome Res.">
        <title>Toward a comprehensive characterization of a human cancer cell phosphoproteome.</title>
        <authorList>
            <person name="Zhou H."/>
            <person name="Di Palma S."/>
            <person name="Preisinger C."/>
            <person name="Peng M."/>
            <person name="Polat A.N."/>
            <person name="Heck A.J."/>
            <person name="Mohammed S."/>
        </authorList>
    </citation>
    <scope>PHOSPHORYLATION [LARGE SCALE ANALYSIS] AT SER-341 AND THR-355</scope>
    <scope>IDENTIFICATION BY MASS SPECTROMETRY [LARGE SCALE ANALYSIS]</scope>
    <source>
        <tissue>Cervix carcinoma</tissue>
        <tissue>Erythroleukemia</tissue>
    </source>
</reference>
<keyword id="KW-0002">3D-structure</keyword>
<keyword id="KW-0007">Acetylation</keyword>
<keyword id="KW-0025">Alternative splicing</keyword>
<keyword id="KW-0238">DNA-binding</keyword>
<keyword id="KW-0539">Nucleus</keyword>
<keyword id="KW-0597">Phosphoprotein</keyword>
<keyword id="KW-1267">Proteomics identification</keyword>
<keyword id="KW-1185">Reference proteome</keyword>
<gene>
    <name type="primary">SSBP4</name>
</gene>
<proteinExistence type="evidence at protein level"/>
<protein>
    <recommendedName>
        <fullName>Single-stranded DNA-binding protein 4</fullName>
    </recommendedName>
</protein>
<organism>
    <name type="scientific">Homo sapiens</name>
    <name type="common">Human</name>
    <dbReference type="NCBI Taxonomy" id="9606"/>
    <lineage>
        <taxon>Eukaryota</taxon>
        <taxon>Metazoa</taxon>
        <taxon>Chordata</taxon>
        <taxon>Craniata</taxon>
        <taxon>Vertebrata</taxon>
        <taxon>Euteleostomi</taxon>
        <taxon>Mammalia</taxon>
        <taxon>Eutheria</taxon>
        <taxon>Euarchontoglires</taxon>
        <taxon>Primates</taxon>
        <taxon>Haplorrhini</taxon>
        <taxon>Catarrhini</taxon>
        <taxon>Hominidae</taxon>
        <taxon>Homo</taxon>
    </lineage>
</organism>
<accession>Q9BWG4</accession>
<accession>Q9BWW5</accession>
<feature type="chain" id="PRO_0000123832" description="Single-stranded DNA-binding protein 4">
    <location>
        <begin position="1"/>
        <end position="385"/>
    </location>
</feature>
<feature type="domain" description="LisH" evidence="2">
    <location>
        <begin position="17"/>
        <end position="49"/>
    </location>
</feature>
<feature type="region of interest" description="Disordered" evidence="3">
    <location>
        <begin position="122"/>
        <end position="287"/>
    </location>
</feature>
<feature type="region of interest" description="Disordered" evidence="3">
    <location>
        <begin position="331"/>
        <end position="363"/>
    </location>
</feature>
<feature type="compositionally biased region" description="Low complexity" evidence="3">
    <location>
        <begin position="245"/>
        <end position="263"/>
    </location>
</feature>
<feature type="compositionally biased region" description="Pro residues" evidence="3">
    <location>
        <begin position="267"/>
        <end position="277"/>
    </location>
</feature>
<feature type="modified residue" description="N-acetylmethionine" evidence="8">
    <location>
        <position position="1"/>
    </location>
</feature>
<feature type="modified residue" description="Phosphoserine" evidence="9">
    <location>
        <position position="341"/>
    </location>
</feature>
<feature type="modified residue" description="Phosphothreonine" evidence="5 6 7 9">
    <location>
        <position position="355"/>
    </location>
</feature>
<feature type="splice variant" id="VSP_054113" description="In isoform 2." evidence="4">
    <location>
        <begin position="123"/>
        <end position="144"/>
    </location>
</feature>
<name>SSBP4_HUMAN</name>
<evidence type="ECO:0000250" key="1"/>
<evidence type="ECO:0000255" key="2">
    <source>
        <dbReference type="PROSITE-ProRule" id="PRU00126"/>
    </source>
</evidence>
<evidence type="ECO:0000256" key="3">
    <source>
        <dbReference type="SAM" id="MobiDB-lite"/>
    </source>
</evidence>
<evidence type="ECO:0000305" key="4"/>
<evidence type="ECO:0007744" key="5">
    <source>
    </source>
</evidence>
<evidence type="ECO:0007744" key="6">
    <source>
    </source>
</evidence>
<evidence type="ECO:0007744" key="7">
    <source>
    </source>
</evidence>
<evidence type="ECO:0007744" key="8">
    <source>
    </source>
</evidence>
<evidence type="ECO:0007744" key="9">
    <source>
    </source>
</evidence>